<reference key="1">
    <citation type="journal article" date="1997" name="Nature">
        <title>Genomic sequence of a Lyme disease spirochaete, Borrelia burgdorferi.</title>
        <authorList>
            <person name="Fraser C.M."/>
            <person name="Casjens S."/>
            <person name="Huang W.M."/>
            <person name="Sutton G.G."/>
            <person name="Clayton R.A."/>
            <person name="Lathigra R."/>
            <person name="White O."/>
            <person name="Ketchum K.A."/>
            <person name="Dodson R.J."/>
            <person name="Hickey E.K."/>
            <person name="Gwinn M.L."/>
            <person name="Dougherty B.A."/>
            <person name="Tomb J.-F."/>
            <person name="Fleischmann R.D."/>
            <person name="Richardson D.L."/>
            <person name="Peterson J.D."/>
            <person name="Kerlavage A.R."/>
            <person name="Quackenbush J."/>
            <person name="Salzberg S.L."/>
            <person name="Hanson M."/>
            <person name="van Vugt R."/>
            <person name="Palmer N."/>
            <person name="Adams M.D."/>
            <person name="Gocayne J.D."/>
            <person name="Weidman J.F."/>
            <person name="Utterback T.R."/>
            <person name="Watthey L."/>
            <person name="McDonald L.A."/>
            <person name="Artiach P."/>
            <person name="Bowman C."/>
            <person name="Garland S.A."/>
            <person name="Fujii C."/>
            <person name="Cotton M.D."/>
            <person name="Horst K."/>
            <person name="Roberts K.M."/>
            <person name="Hatch B."/>
            <person name="Smith H.O."/>
            <person name="Venter J.C."/>
        </authorList>
    </citation>
    <scope>NUCLEOTIDE SEQUENCE [LARGE SCALE GENOMIC DNA]</scope>
    <source>
        <strain>ATCC 35210 / DSM 4680 / CIP 102532 / B31</strain>
    </source>
</reference>
<keyword id="KW-0963">Cytoplasm</keyword>
<keyword id="KW-0238">DNA-binding</keyword>
<keyword id="KW-1185">Reference proteome</keyword>
<keyword id="KW-0804">Transcription</keyword>
<keyword id="KW-0805">Transcription regulation</keyword>
<gene>
    <name type="ordered locus">BB_0025</name>
</gene>
<feature type="chain" id="PRO_0000175770" description="Probable transcriptional regulatory protein BB_0025">
    <location>
        <begin position="1"/>
        <end position="243"/>
    </location>
</feature>
<proteinExistence type="inferred from homology"/>
<organism>
    <name type="scientific">Borreliella burgdorferi (strain ATCC 35210 / DSM 4680 / CIP 102532 / B31)</name>
    <name type="common">Borrelia burgdorferi</name>
    <dbReference type="NCBI Taxonomy" id="224326"/>
    <lineage>
        <taxon>Bacteria</taxon>
        <taxon>Pseudomonadati</taxon>
        <taxon>Spirochaetota</taxon>
        <taxon>Spirochaetia</taxon>
        <taxon>Spirochaetales</taxon>
        <taxon>Borreliaceae</taxon>
        <taxon>Borreliella</taxon>
    </lineage>
</organism>
<accession>O51056</accession>
<evidence type="ECO:0000255" key="1">
    <source>
        <dbReference type="HAMAP-Rule" id="MF_00693"/>
    </source>
</evidence>
<sequence length="243" mass="27034">MSGHSKWSTIKRKKGALDAKRNKIFTKLIREITIAAKIGGGDIESNPRLRVAVNKAKVANMPKDNIEKAIKKGIGGNEGVEYFEITYEAYAPYGVALMIKCLTDNKNRTSSDVKSVLAKGGGSLGTPGSVSYMFYRKGLIVYNLEKYLEDEIMEFALEVGAEDILVSNNEAEVITSPDDFDKVLSFLKTKFKEEVAEIALIPENKISLNKDQAEKIILLVEKLEDFDDVQEVIHNLEIPEELS</sequence>
<protein>
    <recommendedName>
        <fullName evidence="1">Probable transcriptional regulatory protein BB_0025</fullName>
    </recommendedName>
</protein>
<dbReference type="EMBL" id="AE000783">
    <property type="protein sequence ID" value="AAC66408.1"/>
    <property type="molecule type" value="Genomic_DNA"/>
</dbReference>
<dbReference type="PIR" id="A70103">
    <property type="entry name" value="A70103"/>
</dbReference>
<dbReference type="RefSeq" id="NP_212159.1">
    <property type="nucleotide sequence ID" value="NC_001318.1"/>
</dbReference>
<dbReference type="RefSeq" id="WP_002556631.1">
    <property type="nucleotide sequence ID" value="NC_001318.1"/>
</dbReference>
<dbReference type="SMR" id="O51056"/>
<dbReference type="STRING" id="224326.BB_0025"/>
<dbReference type="PaxDb" id="224326-BB_0025"/>
<dbReference type="EnsemblBacteria" id="AAC66408">
    <property type="protein sequence ID" value="AAC66408"/>
    <property type="gene ID" value="BB_0025"/>
</dbReference>
<dbReference type="KEGG" id="bbu:BB_0025"/>
<dbReference type="PATRIC" id="fig|224326.49.peg.424"/>
<dbReference type="HOGENOM" id="CLU_062974_2_2_12"/>
<dbReference type="OrthoDB" id="9781053at2"/>
<dbReference type="Proteomes" id="UP000001807">
    <property type="component" value="Chromosome"/>
</dbReference>
<dbReference type="GO" id="GO:0005829">
    <property type="term" value="C:cytosol"/>
    <property type="evidence" value="ECO:0000314"/>
    <property type="project" value="CAFA"/>
</dbReference>
<dbReference type="GO" id="GO:0003677">
    <property type="term" value="F:DNA binding"/>
    <property type="evidence" value="ECO:0007669"/>
    <property type="project" value="UniProtKB-UniRule"/>
</dbReference>
<dbReference type="GO" id="GO:0006355">
    <property type="term" value="P:regulation of DNA-templated transcription"/>
    <property type="evidence" value="ECO:0007669"/>
    <property type="project" value="UniProtKB-UniRule"/>
</dbReference>
<dbReference type="FunFam" id="1.10.10.200:FF:000002">
    <property type="entry name" value="Probable transcriptional regulatory protein CLM62_37755"/>
    <property type="match status" value="1"/>
</dbReference>
<dbReference type="Gene3D" id="1.10.10.200">
    <property type="match status" value="1"/>
</dbReference>
<dbReference type="Gene3D" id="3.30.70.980">
    <property type="match status" value="2"/>
</dbReference>
<dbReference type="HAMAP" id="MF_00693">
    <property type="entry name" value="Transcrip_reg_TACO1"/>
    <property type="match status" value="1"/>
</dbReference>
<dbReference type="InterPro" id="IPR017856">
    <property type="entry name" value="Integrase-like_N"/>
</dbReference>
<dbReference type="InterPro" id="IPR048300">
    <property type="entry name" value="TACO1_YebC-like_2nd/3rd_dom"/>
</dbReference>
<dbReference type="InterPro" id="IPR049083">
    <property type="entry name" value="TACO1_YebC_N"/>
</dbReference>
<dbReference type="InterPro" id="IPR002876">
    <property type="entry name" value="Transcrip_reg_TACO1-like"/>
</dbReference>
<dbReference type="InterPro" id="IPR026564">
    <property type="entry name" value="Transcrip_reg_TACO1-like_dom3"/>
</dbReference>
<dbReference type="InterPro" id="IPR029072">
    <property type="entry name" value="YebC-like"/>
</dbReference>
<dbReference type="NCBIfam" id="NF001030">
    <property type="entry name" value="PRK00110.1"/>
    <property type="match status" value="1"/>
</dbReference>
<dbReference type="NCBIfam" id="NF009044">
    <property type="entry name" value="PRK12378.1"/>
    <property type="match status" value="1"/>
</dbReference>
<dbReference type="NCBIfam" id="TIGR01033">
    <property type="entry name" value="YebC/PmpR family DNA-binding transcriptional regulator"/>
    <property type="match status" value="1"/>
</dbReference>
<dbReference type="PANTHER" id="PTHR12532:SF6">
    <property type="entry name" value="TRANSCRIPTIONAL REGULATORY PROTEIN YEBC-RELATED"/>
    <property type="match status" value="1"/>
</dbReference>
<dbReference type="PANTHER" id="PTHR12532">
    <property type="entry name" value="TRANSLATIONAL ACTIVATOR OF CYTOCHROME C OXIDASE 1"/>
    <property type="match status" value="1"/>
</dbReference>
<dbReference type="Pfam" id="PF20772">
    <property type="entry name" value="TACO1_YebC_N"/>
    <property type="match status" value="1"/>
</dbReference>
<dbReference type="Pfam" id="PF01709">
    <property type="entry name" value="Transcrip_reg"/>
    <property type="match status" value="1"/>
</dbReference>
<dbReference type="SUPFAM" id="SSF75625">
    <property type="entry name" value="YebC-like"/>
    <property type="match status" value="1"/>
</dbReference>
<comment type="subcellular location">
    <subcellularLocation>
        <location evidence="1">Cytoplasm</location>
    </subcellularLocation>
</comment>
<comment type="similarity">
    <text evidence="1">Belongs to the TACO1 family.</text>
</comment>
<name>Y025_BORBU</name>